<gene>
    <name evidence="1" type="primary">rpiA</name>
    <name type="ordered locus">BMA1260</name>
</gene>
<organism>
    <name type="scientific">Burkholderia mallei (strain ATCC 23344)</name>
    <dbReference type="NCBI Taxonomy" id="243160"/>
    <lineage>
        <taxon>Bacteria</taxon>
        <taxon>Pseudomonadati</taxon>
        <taxon>Pseudomonadota</taxon>
        <taxon>Betaproteobacteria</taxon>
        <taxon>Burkholderiales</taxon>
        <taxon>Burkholderiaceae</taxon>
        <taxon>Burkholderia</taxon>
        <taxon>pseudomallei group</taxon>
    </lineage>
</organism>
<reference key="1">
    <citation type="journal article" date="2004" name="Proc. Natl. Acad. Sci. U.S.A.">
        <title>Structural flexibility in the Burkholderia mallei genome.</title>
        <authorList>
            <person name="Nierman W.C."/>
            <person name="DeShazer D."/>
            <person name="Kim H.S."/>
            <person name="Tettelin H."/>
            <person name="Nelson K.E."/>
            <person name="Feldblyum T.V."/>
            <person name="Ulrich R.L."/>
            <person name="Ronning C.M."/>
            <person name="Brinkac L.M."/>
            <person name="Daugherty S.C."/>
            <person name="Davidsen T.D."/>
            <person name="DeBoy R.T."/>
            <person name="Dimitrov G."/>
            <person name="Dodson R.J."/>
            <person name="Durkin A.S."/>
            <person name="Gwinn M.L."/>
            <person name="Haft D.H."/>
            <person name="Khouri H.M."/>
            <person name="Kolonay J.F."/>
            <person name="Madupu R."/>
            <person name="Mohammoud Y."/>
            <person name="Nelson W.C."/>
            <person name="Radune D."/>
            <person name="Romero C.M."/>
            <person name="Sarria S."/>
            <person name="Selengut J."/>
            <person name="Shamblin C."/>
            <person name="Sullivan S.A."/>
            <person name="White O."/>
            <person name="Yu Y."/>
            <person name="Zafar N."/>
            <person name="Zhou L."/>
            <person name="Fraser C.M."/>
        </authorList>
    </citation>
    <scope>NUCLEOTIDE SEQUENCE [LARGE SCALE GENOMIC DNA]</scope>
    <source>
        <strain>ATCC 23344</strain>
    </source>
</reference>
<dbReference type="EC" id="5.3.1.6" evidence="1"/>
<dbReference type="EMBL" id="CP000010">
    <property type="protein sequence ID" value="AAU47493.1"/>
    <property type="status" value="ALT_INIT"/>
    <property type="molecule type" value="Genomic_DNA"/>
</dbReference>
<dbReference type="RefSeq" id="WP_004192848.1">
    <property type="nucleotide sequence ID" value="NC_006348.1"/>
</dbReference>
<dbReference type="RefSeq" id="YP_102931.1">
    <property type="nucleotide sequence ID" value="NC_006348.1"/>
</dbReference>
<dbReference type="SMR" id="Q62K38"/>
<dbReference type="GeneID" id="93060124"/>
<dbReference type="KEGG" id="bma:BMA1260"/>
<dbReference type="PATRIC" id="fig|243160.12.peg.1291"/>
<dbReference type="eggNOG" id="COG0120">
    <property type="taxonomic scope" value="Bacteria"/>
</dbReference>
<dbReference type="HOGENOM" id="CLU_056590_1_1_4"/>
<dbReference type="UniPathway" id="UPA00115">
    <property type="reaction ID" value="UER00412"/>
</dbReference>
<dbReference type="Proteomes" id="UP000006693">
    <property type="component" value="Chromosome 1"/>
</dbReference>
<dbReference type="GO" id="GO:0005829">
    <property type="term" value="C:cytosol"/>
    <property type="evidence" value="ECO:0007669"/>
    <property type="project" value="TreeGrafter"/>
</dbReference>
<dbReference type="GO" id="GO:0004751">
    <property type="term" value="F:ribose-5-phosphate isomerase activity"/>
    <property type="evidence" value="ECO:0007669"/>
    <property type="project" value="UniProtKB-UniRule"/>
</dbReference>
<dbReference type="GO" id="GO:0006014">
    <property type="term" value="P:D-ribose metabolic process"/>
    <property type="evidence" value="ECO:0007669"/>
    <property type="project" value="TreeGrafter"/>
</dbReference>
<dbReference type="GO" id="GO:0009052">
    <property type="term" value="P:pentose-phosphate shunt, non-oxidative branch"/>
    <property type="evidence" value="ECO:0007669"/>
    <property type="project" value="UniProtKB-UniRule"/>
</dbReference>
<dbReference type="CDD" id="cd01398">
    <property type="entry name" value="RPI_A"/>
    <property type="match status" value="1"/>
</dbReference>
<dbReference type="FunFam" id="3.40.50.1360:FF:000001">
    <property type="entry name" value="Ribose-5-phosphate isomerase A"/>
    <property type="match status" value="1"/>
</dbReference>
<dbReference type="Gene3D" id="3.30.70.260">
    <property type="match status" value="1"/>
</dbReference>
<dbReference type="Gene3D" id="3.40.50.1360">
    <property type="match status" value="1"/>
</dbReference>
<dbReference type="HAMAP" id="MF_00170">
    <property type="entry name" value="Rib_5P_isom_A"/>
    <property type="match status" value="1"/>
</dbReference>
<dbReference type="InterPro" id="IPR037171">
    <property type="entry name" value="NagB/RpiA_transferase-like"/>
</dbReference>
<dbReference type="InterPro" id="IPR020672">
    <property type="entry name" value="Ribose5P_isomerase_typA_subgr"/>
</dbReference>
<dbReference type="InterPro" id="IPR004788">
    <property type="entry name" value="Ribose5P_isomerase_type_A"/>
</dbReference>
<dbReference type="NCBIfam" id="NF001924">
    <property type="entry name" value="PRK00702.1"/>
    <property type="match status" value="1"/>
</dbReference>
<dbReference type="NCBIfam" id="TIGR00021">
    <property type="entry name" value="rpiA"/>
    <property type="match status" value="1"/>
</dbReference>
<dbReference type="PANTHER" id="PTHR11934">
    <property type="entry name" value="RIBOSE-5-PHOSPHATE ISOMERASE"/>
    <property type="match status" value="1"/>
</dbReference>
<dbReference type="PANTHER" id="PTHR11934:SF0">
    <property type="entry name" value="RIBOSE-5-PHOSPHATE ISOMERASE"/>
    <property type="match status" value="1"/>
</dbReference>
<dbReference type="Pfam" id="PF06026">
    <property type="entry name" value="Rib_5-P_isom_A"/>
    <property type="match status" value="1"/>
</dbReference>
<dbReference type="SUPFAM" id="SSF75445">
    <property type="entry name" value="D-ribose-5-phosphate isomerase (RpiA), lid domain"/>
    <property type="match status" value="1"/>
</dbReference>
<dbReference type="SUPFAM" id="SSF100950">
    <property type="entry name" value="NagB/RpiA/CoA transferase-like"/>
    <property type="match status" value="1"/>
</dbReference>
<name>RPIA_BURMA</name>
<protein>
    <recommendedName>
        <fullName evidence="1">Ribose-5-phosphate isomerase A</fullName>
        <ecNumber evidence="1">5.3.1.6</ecNumber>
    </recommendedName>
    <alternativeName>
        <fullName evidence="1">Phosphoriboisomerase A</fullName>
        <shortName evidence="1">PRI</shortName>
    </alternativeName>
</protein>
<keyword id="KW-0413">Isomerase</keyword>
<keyword id="KW-1185">Reference proteome</keyword>
<sequence>MTQDELKRLVGEAAARYVTENVPQGAVIGVGTGSTANCFIDALAAVKDRYRGAVSSSVATTERLKSHGIKVFDLNEIESLQVYVDGADEIDGSGAMIKGGGGALTREKIVASVAETFVCIADASKRVAVLGQFPLPVEVVPMARTAIGRRLAALGGVPVLRVKQDGAPYVTDNGNEILDVKGLRIDDPRALEAAINGWPGVVTVGLFAQRGADLCLLGTERGVETLRYAAH</sequence>
<comment type="function">
    <text evidence="1">Catalyzes the reversible conversion of ribose-5-phosphate to ribulose 5-phosphate.</text>
</comment>
<comment type="catalytic activity">
    <reaction evidence="1">
        <text>aldehydo-D-ribose 5-phosphate = D-ribulose 5-phosphate</text>
        <dbReference type="Rhea" id="RHEA:14657"/>
        <dbReference type="ChEBI" id="CHEBI:58121"/>
        <dbReference type="ChEBI" id="CHEBI:58273"/>
        <dbReference type="EC" id="5.3.1.6"/>
    </reaction>
</comment>
<comment type="pathway">
    <text evidence="1">Carbohydrate degradation; pentose phosphate pathway; D-ribose 5-phosphate from D-ribulose 5-phosphate (non-oxidative stage): step 1/1.</text>
</comment>
<comment type="subunit">
    <text evidence="1">Homodimer.</text>
</comment>
<comment type="similarity">
    <text evidence="1">Belongs to the ribose 5-phosphate isomerase family.</text>
</comment>
<comment type="sequence caution" evidence="2">
    <conflict type="erroneous initiation">
        <sequence resource="EMBL-CDS" id="AAU47493"/>
    </conflict>
</comment>
<accession>Q62K38</accession>
<feature type="chain" id="PRO_0000158401" description="Ribose-5-phosphate isomerase A">
    <location>
        <begin position="1"/>
        <end position="231"/>
    </location>
</feature>
<feature type="active site" description="Proton acceptor" evidence="1">
    <location>
        <position position="107"/>
    </location>
</feature>
<feature type="binding site" evidence="1">
    <location>
        <begin position="32"/>
        <end position="35"/>
    </location>
    <ligand>
        <name>substrate</name>
    </ligand>
</feature>
<feature type="binding site" evidence="1">
    <location>
        <begin position="85"/>
        <end position="88"/>
    </location>
    <ligand>
        <name>substrate</name>
    </ligand>
</feature>
<feature type="binding site" evidence="1">
    <location>
        <begin position="98"/>
        <end position="101"/>
    </location>
    <ligand>
        <name>substrate</name>
    </ligand>
</feature>
<feature type="binding site" evidence="1">
    <location>
        <position position="125"/>
    </location>
    <ligand>
        <name>substrate</name>
    </ligand>
</feature>
<proteinExistence type="inferred from homology"/>
<evidence type="ECO:0000255" key="1">
    <source>
        <dbReference type="HAMAP-Rule" id="MF_00170"/>
    </source>
</evidence>
<evidence type="ECO:0000305" key="2"/>